<proteinExistence type="evidence at transcript level"/>
<reference key="1">
    <citation type="online journal article" date="1998" name="Plant Gene Register">
        <title>Ribosomal protein L24 homologue is expressed in Cicer arietinum L. epicotyls.</title>
        <authorList>
            <person name="Esteban R."/>
            <person name="Labrador E."/>
            <person name="Dopico B."/>
        </authorList>
        <locator>PGR98-092</locator>
    </citation>
    <scope>NUCLEOTIDE SEQUENCE [MRNA]</scope>
    <source>
        <strain>cv. Castellana</strain>
        <tissue>Etiolated epicotyl</tissue>
    </source>
</reference>
<accession>O65743</accession>
<evidence type="ECO:0000256" key="1">
    <source>
        <dbReference type="SAM" id="MobiDB-lite"/>
    </source>
</evidence>
<evidence type="ECO:0000305" key="2"/>
<feature type="chain" id="PRO_0000136882" description="Large ribosomal subunit protein eL24">
    <location>
        <begin position="1"/>
        <end position="164"/>
    </location>
</feature>
<feature type="region of interest" description="Disordered" evidence="1">
    <location>
        <begin position="63"/>
        <end position="82"/>
    </location>
</feature>
<feature type="region of interest" description="Disordered" evidence="1">
    <location>
        <begin position="117"/>
        <end position="164"/>
    </location>
</feature>
<feature type="compositionally biased region" description="Basic residues" evidence="1">
    <location>
        <begin position="71"/>
        <end position="81"/>
    </location>
</feature>
<feature type="compositionally biased region" description="Basic and acidic residues" evidence="1">
    <location>
        <begin position="117"/>
        <end position="133"/>
    </location>
</feature>
<comment type="subcellular location">
    <subcellularLocation>
        <location>Cytoplasm</location>
    </subcellularLocation>
</comment>
<comment type="similarity">
    <text evidence="2">Belongs to the eukaryotic ribosomal protein eL24 family.</text>
</comment>
<sequence>MVLKTELCRFSGAKIYPGRGIRFIRGDSQVFLFVNSKCKRYFHNRLKPSKLTWTAMFRKQHKKDAAQEAVKKRRRATKKPYSRSIVGATLEVIQKKRTEKPEVRDAAREAALREIKERIKKTKDEKKAKKAEVASKAQKSQGKGNVQKGALPKGPKMGGGGGKA</sequence>
<protein>
    <recommendedName>
        <fullName evidence="2">Large ribosomal subunit protein eL24</fullName>
    </recommendedName>
    <alternativeName>
        <fullName>60S ribosomal protein L24</fullName>
    </alternativeName>
</protein>
<dbReference type="EMBL" id="AJ225027">
    <property type="protein sequence ID" value="CAA12358.1"/>
    <property type="molecule type" value="mRNA"/>
</dbReference>
<dbReference type="RefSeq" id="NP_001266018.1">
    <property type="nucleotide sequence ID" value="NM_001279089.1"/>
</dbReference>
<dbReference type="SMR" id="O65743"/>
<dbReference type="STRING" id="3827.O65743"/>
<dbReference type="PaxDb" id="3827-XP_004494125.1"/>
<dbReference type="GeneID" id="101492846"/>
<dbReference type="KEGG" id="cam:101492846"/>
<dbReference type="eggNOG" id="KOG1722">
    <property type="taxonomic scope" value="Eukaryota"/>
</dbReference>
<dbReference type="OrthoDB" id="1727108at2759"/>
<dbReference type="Proteomes" id="UP000087171">
    <property type="component" value="Chromosome Ca3"/>
</dbReference>
<dbReference type="GO" id="GO:0022625">
    <property type="term" value="C:cytosolic large ribosomal subunit"/>
    <property type="evidence" value="ECO:0007669"/>
    <property type="project" value="TreeGrafter"/>
</dbReference>
<dbReference type="GO" id="GO:0003729">
    <property type="term" value="F:mRNA binding"/>
    <property type="evidence" value="ECO:0007669"/>
    <property type="project" value="TreeGrafter"/>
</dbReference>
<dbReference type="GO" id="GO:0003735">
    <property type="term" value="F:structural constituent of ribosome"/>
    <property type="evidence" value="ECO:0007669"/>
    <property type="project" value="InterPro"/>
</dbReference>
<dbReference type="GO" id="GO:0002181">
    <property type="term" value="P:cytoplasmic translation"/>
    <property type="evidence" value="ECO:0007669"/>
    <property type="project" value="TreeGrafter"/>
</dbReference>
<dbReference type="CDD" id="cd00472">
    <property type="entry name" value="Ribosomal_L24e_L24"/>
    <property type="match status" value="1"/>
</dbReference>
<dbReference type="FunFam" id="2.30.170.20:FF:000003">
    <property type="entry name" value="60S ribosomal protein L24"/>
    <property type="match status" value="1"/>
</dbReference>
<dbReference type="Gene3D" id="6.10.250.1270">
    <property type="match status" value="1"/>
</dbReference>
<dbReference type="Gene3D" id="2.30.170.20">
    <property type="entry name" value="Ribosomal protein L24e"/>
    <property type="match status" value="1"/>
</dbReference>
<dbReference type="InterPro" id="IPR038630">
    <property type="entry name" value="L24e/L24_sf"/>
</dbReference>
<dbReference type="InterPro" id="IPR056366">
    <property type="entry name" value="Ribosomal_eL24"/>
</dbReference>
<dbReference type="InterPro" id="IPR000988">
    <property type="entry name" value="Ribosomal_eL24-rel_N"/>
</dbReference>
<dbReference type="InterPro" id="IPR023442">
    <property type="entry name" value="Ribosomal_eL24_CS"/>
</dbReference>
<dbReference type="InterPro" id="IPR011017">
    <property type="entry name" value="TRASH_dom"/>
</dbReference>
<dbReference type="PANTHER" id="PTHR10792">
    <property type="entry name" value="60S RIBOSOMAL PROTEIN L24"/>
    <property type="match status" value="1"/>
</dbReference>
<dbReference type="PANTHER" id="PTHR10792:SF51">
    <property type="entry name" value="LARGE RIBOSOMAL SUBUNIT PROTEIN EL24Y-RELATED"/>
    <property type="match status" value="1"/>
</dbReference>
<dbReference type="Pfam" id="PF01246">
    <property type="entry name" value="Ribosomal_L24e"/>
    <property type="match status" value="1"/>
</dbReference>
<dbReference type="SMART" id="SM00746">
    <property type="entry name" value="TRASH"/>
    <property type="match status" value="1"/>
</dbReference>
<dbReference type="SUPFAM" id="SSF57716">
    <property type="entry name" value="Glucocorticoid receptor-like (DNA-binding domain)"/>
    <property type="match status" value="1"/>
</dbReference>
<dbReference type="PROSITE" id="PS01073">
    <property type="entry name" value="RIBOSOMAL_L24E"/>
    <property type="match status" value="1"/>
</dbReference>
<gene>
    <name type="primary">RPL24</name>
</gene>
<organism>
    <name type="scientific">Cicer arietinum</name>
    <name type="common">Chickpea</name>
    <name type="synonym">Garbanzo</name>
    <dbReference type="NCBI Taxonomy" id="3827"/>
    <lineage>
        <taxon>Eukaryota</taxon>
        <taxon>Viridiplantae</taxon>
        <taxon>Streptophyta</taxon>
        <taxon>Embryophyta</taxon>
        <taxon>Tracheophyta</taxon>
        <taxon>Spermatophyta</taxon>
        <taxon>Magnoliopsida</taxon>
        <taxon>eudicotyledons</taxon>
        <taxon>Gunneridae</taxon>
        <taxon>Pentapetalae</taxon>
        <taxon>rosids</taxon>
        <taxon>fabids</taxon>
        <taxon>Fabales</taxon>
        <taxon>Fabaceae</taxon>
        <taxon>Papilionoideae</taxon>
        <taxon>50 kb inversion clade</taxon>
        <taxon>NPAAA clade</taxon>
        <taxon>Hologalegina</taxon>
        <taxon>IRL clade</taxon>
        <taxon>Cicereae</taxon>
        <taxon>Cicer</taxon>
    </lineage>
</organism>
<keyword id="KW-0963">Cytoplasm</keyword>
<keyword id="KW-1185">Reference proteome</keyword>
<keyword id="KW-0687">Ribonucleoprotein</keyword>
<keyword id="KW-0689">Ribosomal protein</keyword>
<name>RL24_CICAR</name>